<evidence type="ECO:0000250" key="1"/>
<evidence type="ECO:0000250" key="2">
    <source>
        <dbReference type="UniProtKB" id="Q99231"/>
    </source>
</evidence>
<evidence type="ECO:0000255" key="3">
    <source>
        <dbReference type="PROSITE-ProRule" id="PRU00457"/>
    </source>
</evidence>
<evidence type="ECO:0000255" key="4">
    <source>
        <dbReference type="PROSITE-ProRule" id="PRU10094"/>
    </source>
</evidence>
<evidence type="ECO:0000256" key="5">
    <source>
        <dbReference type="SAM" id="MobiDB-lite"/>
    </source>
</evidence>
<evidence type="ECO:0000305" key="6"/>
<name>YG13B_YEAST</name>
<protein>
    <recommendedName>
        <fullName>Transposon Ty1-GR3 Gag-Pol polyprotein</fullName>
    </recommendedName>
    <alternativeName>
        <fullName>Gag-Pol-p199</fullName>
    </alternativeName>
    <alternativeName>
        <fullName>TY1A-TY1B</fullName>
    </alternativeName>
    <alternativeName>
        <fullName>Transposon Ty1 TYA-TYB polyprotein</fullName>
    </alternativeName>
    <alternativeName>
        <fullName>p190</fullName>
    </alternativeName>
    <component>
        <recommendedName>
            <fullName>Capsid protein</fullName>
            <shortName>CA</shortName>
        </recommendedName>
        <alternativeName>
            <fullName>Gag-p45</fullName>
        </alternativeName>
        <alternativeName>
            <fullName>p54</fullName>
        </alternativeName>
    </component>
    <component>
        <recommendedName>
            <fullName>Ty1 protease</fullName>
            <shortName>PR</shortName>
            <ecNumber>3.4.23.-</ecNumber>
        </recommendedName>
        <alternativeName>
            <fullName>Pol-p20</fullName>
        </alternativeName>
        <alternativeName>
            <fullName>p23</fullName>
        </alternativeName>
    </component>
    <component>
        <recommendedName>
            <fullName>Integrase</fullName>
            <shortName>IN</shortName>
        </recommendedName>
        <alternativeName>
            <fullName>Pol-p71</fullName>
        </alternativeName>
        <alternativeName>
            <fullName>p84</fullName>
        </alternativeName>
        <alternativeName>
            <fullName>p90</fullName>
        </alternativeName>
    </component>
    <component>
        <recommendedName>
            <fullName>Reverse transcriptase/ribonuclease H</fullName>
            <shortName>RT</shortName>
            <shortName>RT-RH</shortName>
            <ecNumber>2.7.7.49</ecNumber>
            <ecNumber>2.7.7.7</ecNumber>
            <ecNumber>3.1.26.4</ecNumber>
        </recommendedName>
        <alternativeName>
            <fullName>Pol-p63</fullName>
        </alternativeName>
        <alternativeName>
            <fullName>p60</fullName>
        </alternativeName>
    </component>
</protein>
<reference key="1">
    <citation type="journal article" date="1997" name="Nature">
        <title>The nucleotide sequence of Saccharomyces cerevisiae chromosome VII.</title>
        <authorList>
            <person name="Tettelin H."/>
            <person name="Agostoni-Carbone M.L."/>
            <person name="Albermann K."/>
            <person name="Albers M."/>
            <person name="Arroyo J."/>
            <person name="Backes U."/>
            <person name="Barreiros T."/>
            <person name="Bertani I."/>
            <person name="Bjourson A.J."/>
            <person name="Brueckner M."/>
            <person name="Bruschi C.V."/>
            <person name="Carignani G."/>
            <person name="Castagnoli L."/>
            <person name="Cerdan E."/>
            <person name="Clemente M.L."/>
            <person name="Coblenz A."/>
            <person name="Coglievina M."/>
            <person name="Coissac E."/>
            <person name="Defoor E."/>
            <person name="Del Bino S."/>
            <person name="Delius H."/>
            <person name="Delneri D."/>
            <person name="de Wergifosse P."/>
            <person name="Dujon B."/>
            <person name="Durand P."/>
            <person name="Entian K.-D."/>
            <person name="Eraso P."/>
            <person name="Escribano V."/>
            <person name="Fabiani L."/>
            <person name="Fartmann B."/>
            <person name="Feroli F."/>
            <person name="Feuermann M."/>
            <person name="Frontali L."/>
            <person name="Garcia-Gonzalez M."/>
            <person name="Garcia-Saez M.I."/>
            <person name="Goffeau A."/>
            <person name="Guerreiro P."/>
            <person name="Hani J."/>
            <person name="Hansen M."/>
            <person name="Hebling U."/>
            <person name="Hernandez K."/>
            <person name="Heumann K."/>
            <person name="Hilger F."/>
            <person name="Hofmann B."/>
            <person name="Indge K.J."/>
            <person name="James C.M."/>
            <person name="Klima R."/>
            <person name="Koetter P."/>
            <person name="Kramer B."/>
            <person name="Kramer W."/>
            <person name="Lauquin G."/>
            <person name="Leuther H."/>
            <person name="Louis E.J."/>
            <person name="Maillier E."/>
            <person name="Marconi A."/>
            <person name="Martegani E."/>
            <person name="Mazon M.J."/>
            <person name="Mazzoni C."/>
            <person name="McReynolds A.D.K."/>
            <person name="Melchioretto P."/>
            <person name="Mewes H.-W."/>
            <person name="Minenkova O."/>
            <person name="Mueller-Auer S."/>
            <person name="Nawrocki A."/>
            <person name="Netter P."/>
            <person name="Neu R."/>
            <person name="Nombela C."/>
            <person name="Oliver S.G."/>
            <person name="Panzeri L."/>
            <person name="Paoluzi S."/>
            <person name="Plevani P."/>
            <person name="Portetelle D."/>
            <person name="Portillo F."/>
            <person name="Potier S."/>
            <person name="Purnelle B."/>
            <person name="Rieger M."/>
            <person name="Riles L."/>
            <person name="Rinaldi T."/>
            <person name="Robben J."/>
            <person name="Rodrigues-Pousada C."/>
            <person name="Rodriguez-Belmonte E."/>
            <person name="Rodriguez-Torres A.M."/>
            <person name="Rose M."/>
            <person name="Ruzzi M."/>
            <person name="Saliola M."/>
            <person name="Sanchez-Perez M."/>
            <person name="Schaefer B."/>
            <person name="Schaefer M."/>
            <person name="Scharfe M."/>
            <person name="Schmidheini T."/>
            <person name="Schreer A."/>
            <person name="Skala J."/>
            <person name="Souciet J.-L."/>
            <person name="Steensma H.Y."/>
            <person name="Talla E."/>
            <person name="Thierry A."/>
            <person name="Vandenbol M."/>
            <person name="van der Aart Q.J.M."/>
            <person name="Van Dyck L."/>
            <person name="Vanoni M."/>
            <person name="Verhasselt P."/>
            <person name="Voet M."/>
            <person name="Volckaert G."/>
            <person name="Wambutt R."/>
            <person name="Watson M.D."/>
            <person name="Weber N."/>
            <person name="Wedler E."/>
            <person name="Wedler H."/>
            <person name="Wipfli P."/>
            <person name="Wolf K."/>
            <person name="Wright L.F."/>
            <person name="Zaccaria P."/>
            <person name="Zimmermann M."/>
            <person name="Zollner A."/>
            <person name="Kleine K."/>
        </authorList>
    </citation>
    <scope>NUCLEOTIDE SEQUENCE [LARGE SCALE GENOMIC DNA]</scope>
    <source>
        <strain>ATCC 204508 / S288c</strain>
    </source>
</reference>
<reference key="2">
    <citation type="journal article" date="2014" name="G3 (Bethesda)">
        <title>The reference genome sequence of Saccharomyces cerevisiae: Then and now.</title>
        <authorList>
            <person name="Engel S.R."/>
            <person name="Dietrich F.S."/>
            <person name="Fisk D.G."/>
            <person name="Binkley G."/>
            <person name="Balakrishnan R."/>
            <person name="Costanzo M.C."/>
            <person name="Dwight S.S."/>
            <person name="Hitz B.C."/>
            <person name="Karra K."/>
            <person name="Nash R.S."/>
            <person name="Weng S."/>
            <person name="Wong E.D."/>
            <person name="Lloyd P."/>
            <person name="Skrzypek M.S."/>
            <person name="Miyasato S.R."/>
            <person name="Simison M."/>
            <person name="Cherry J.M."/>
        </authorList>
    </citation>
    <scope>GENOME REANNOTATION</scope>
    <source>
        <strain>ATCC 204508 / S288c</strain>
    </source>
</reference>
<reference key="3">
    <citation type="journal article" date="1998" name="Genome Res.">
        <title>Transposable elements and genome organization: a comprehensive survey of retrotransposons revealed by the complete Saccharomyces cerevisiae genome sequence.</title>
        <authorList>
            <person name="Kim J.M."/>
            <person name="Vanguri S."/>
            <person name="Boeke J.D."/>
            <person name="Gabriel A."/>
            <person name="Voytas D.F."/>
        </authorList>
    </citation>
    <scope>NOMENCLATURE</scope>
</reference>
<reference key="4">
    <citation type="journal article" date="2005" name="Cytogenet. Genome Res.">
        <title>Happy together: the life and times of Ty retrotransposons and their hosts.</title>
        <authorList>
            <person name="Lesage P."/>
            <person name="Todeschini A.L."/>
        </authorList>
    </citation>
    <scope>REVIEW</scope>
</reference>
<reference key="5">
    <citation type="journal article" date="2005" name="Cytogenet. Genome Res.">
        <title>Reverse transcriptase and integrase of the Saccharomyces cerevisiae Ty1 element.</title>
        <authorList>
            <person name="Wilhelm F.-X."/>
            <person name="Wilhelm M."/>
            <person name="Gabriel A."/>
        </authorList>
    </citation>
    <scope>REVIEW</scope>
    <scope>DOMAINS</scope>
</reference>
<keyword id="KW-0064">Aspartyl protease</keyword>
<keyword id="KW-0067">ATP-binding</keyword>
<keyword id="KW-0963">Cytoplasm</keyword>
<keyword id="KW-0229">DNA integration</keyword>
<keyword id="KW-0233">DNA recombination</keyword>
<keyword id="KW-0238">DNA-binding</keyword>
<keyword id="KW-0239">DNA-directed DNA polymerase</keyword>
<keyword id="KW-0255">Endonuclease</keyword>
<keyword id="KW-0378">Hydrolase</keyword>
<keyword id="KW-0460">Magnesium</keyword>
<keyword id="KW-0479">Metal-binding</keyword>
<keyword id="KW-0511">Multifunctional enzyme</keyword>
<keyword id="KW-0540">Nuclease</keyword>
<keyword id="KW-0547">Nucleotide-binding</keyword>
<keyword id="KW-0548">Nucleotidyltransferase</keyword>
<keyword id="KW-0539">Nucleus</keyword>
<keyword id="KW-0597">Phosphoprotein</keyword>
<keyword id="KW-0645">Protease</keyword>
<keyword id="KW-1185">Reference proteome</keyword>
<keyword id="KW-0688">Ribosomal frameshifting</keyword>
<keyword id="KW-0694">RNA-binding</keyword>
<keyword id="KW-0695">RNA-directed DNA polymerase</keyword>
<keyword id="KW-0808">Transferase</keyword>
<keyword id="KW-0814">Transposable element</keyword>
<keyword id="KW-0815">Transposition</keyword>
<keyword id="KW-1188">Viral release from host cell</keyword>
<keyword id="KW-0917">Virion maturation</keyword>
<keyword id="KW-0862">Zinc</keyword>
<keyword id="KW-0863">Zinc-finger</keyword>
<organism>
    <name type="scientific">Saccharomyces cerevisiae (strain ATCC 204508 / S288c)</name>
    <name type="common">Baker's yeast</name>
    <dbReference type="NCBI Taxonomy" id="559292"/>
    <lineage>
        <taxon>Eukaryota</taxon>
        <taxon>Fungi</taxon>
        <taxon>Dikarya</taxon>
        <taxon>Ascomycota</taxon>
        <taxon>Saccharomycotina</taxon>
        <taxon>Saccharomycetes</taxon>
        <taxon>Saccharomycetales</taxon>
        <taxon>Saccharomycetaceae</taxon>
        <taxon>Saccharomyces</taxon>
    </lineage>
</organism>
<dbReference type="EC" id="3.4.23.-"/>
<dbReference type="EC" id="2.7.7.49"/>
<dbReference type="EC" id="2.7.7.7"/>
<dbReference type="EC" id="3.1.26.4"/>
<dbReference type="EMBL" id="Z72947">
    <property type="protein sequence ID" value="CAA97182.1"/>
    <property type="status" value="ALT_INIT"/>
    <property type="molecule type" value="Genomic_DNA"/>
</dbReference>
<dbReference type="EMBL" id="Z72946">
    <property type="protein sequence ID" value="CAA97178.1"/>
    <property type="status" value="ALT_INIT"/>
    <property type="molecule type" value="Genomic_DNA"/>
</dbReference>
<dbReference type="EMBL" id="BK006941">
    <property type="protein sequence ID" value="DAA08255.1"/>
    <property type="molecule type" value="Genomic_DNA"/>
</dbReference>
<dbReference type="PIR" id="S40969">
    <property type="entry name" value="S40969"/>
</dbReference>
<dbReference type="PIR" id="S69845">
    <property type="entry name" value="S69845"/>
</dbReference>
<dbReference type="RefSeq" id="NP_058165.3">
    <molecule id="Q12316-1"/>
    <property type="nucleotide sequence ID" value="NM_001184400.4"/>
</dbReference>
<dbReference type="SMR" id="Q12316"/>
<dbReference type="BioGRID" id="33411">
    <property type="interactions" value="4"/>
</dbReference>
<dbReference type="FunCoup" id="Q12316">
    <property type="interactions" value="95"/>
</dbReference>
<dbReference type="MINT" id="Q12316"/>
<dbReference type="GlyGen" id="Q12316">
    <property type="glycosylation" value="3 sites"/>
</dbReference>
<dbReference type="PaxDb" id="4932-YGR161C-D"/>
<dbReference type="PeptideAtlas" id="Q12316"/>
<dbReference type="GeneID" id="853068"/>
<dbReference type="KEGG" id="sce:YGR161C-D"/>
<dbReference type="AGR" id="SGD:S000007368"/>
<dbReference type="SGD" id="S000007368">
    <property type="gene designation" value="YGR161C-D"/>
</dbReference>
<dbReference type="VEuPathDB" id="FungiDB:YGR161C-D"/>
<dbReference type="eggNOG" id="KOG0017">
    <property type="taxonomic scope" value="Eukaryota"/>
</dbReference>
<dbReference type="HOGENOM" id="CLU_244151_0_0_1"/>
<dbReference type="InParanoid" id="Q12316"/>
<dbReference type="OrthoDB" id="4046078at2759"/>
<dbReference type="ChiTaRS" id="YGR161C-D">
    <property type="organism name" value="yeast"/>
</dbReference>
<dbReference type="Proteomes" id="UP000002311">
    <property type="component" value="Chromosome VII"/>
</dbReference>
<dbReference type="RNAct" id="Q12316">
    <property type="molecule type" value="protein"/>
</dbReference>
<dbReference type="GO" id="GO:0005737">
    <property type="term" value="C:cytoplasm"/>
    <property type="evidence" value="ECO:0007669"/>
    <property type="project" value="UniProtKB-SubCell"/>
</dbReference>
<dbReference type="GO" id="GO:0005634">
    <property type="term" value="C:nucleus"/>
    <property type="evidence" value="ECO:0000314"/>
    <property type="project" value="SGD"/>
</dbReference>
<dbReference type="GO" id="GO:0004190">
    <property type="term" value="F:aspartic-type endopeptidase activity"/>
    <property type="evidence" value="ECO:0007669"/>
    <property type="project" value="UniProtKB-KW"/>
</dbReference>
<dbReference type="GO" id="GO:0005524">
    <property type="term" value="F:ATP binding"/>
    <property type="evidence" value="ECO:0007669"/>
    <property type="project" value="UniProtKB-KW"/>
</dbReference>
<dbReference type="GO" id="GO:0003677">
    <property type="term" value="F:DNA binding"/>
    <property type="evidence" value="ECO:0007669"/>
    <property type="project" value="UniProtKB-KW"/>
</dbReference>
<dbReference type="GO" id="GO:0003887">
    <property type="term" value="F:DNA-directed DNA polymerase activity"/>
    <property type="evidence" value="ECO:0007669"/>
    <property type="project" value="UniProtKB-KW"/>
</dbReference>
<dbReference type="GO" id="GO:0003723">
    <property type="term" value="F:RNA binding"/>
    <property type="evidence" value="ECO:0007669"/>
    <property type="project" value="UniProtKB-KW"/>
</dbReference>
<dbReference type="GO" id="GO:0003964">
    <property type="term" value="F:RNA-directed DNA polymerase activity"/>
    <property type="evidence" value="ECO:0007669"/>
    <property type="project" value="UniProtKB-KW"/>
</dbReference>
<dbReference type="GO" id="GO:0004523">
    <property type="term" value="F:RNA-DNA hybrid ribonuclease activity"/>
    <property type="evidence" value="ECO:0007669"/>
    <property type="project" value="UniProtKB-EC"/>
</dbReference>
<dbReference type="GO" id="GO:0008270">
    <property type="term" value="F:zinc ion binding"/>
    <property type="evidence" value="ECO:0007669"/>
    <property type="project" value="UniProtKB-KW"/>
</dbReference>
<dbReference type="GO" id="GO:0015074">
    <property type="term" value="P:DNA integration"/>
    <property type="evidence" value="ECO:0007669"/>
    <property type="project" value="UniProtKB-KW"/>
</dbReference>
<dbReference type="GO" id="GO:0006310">
    <property type="term" value="P:DNA recombination"/>
    <property type="evidence" value="ECO:0007669"/>
    <property type="project" value="UniProtKB-KW"/>
</dbReference>
<dbReference type="GO" id="GO:0006508">
    <property type="term" value="P:proteolysis"/>
    <property type="evidence" value="ECO:0007669"/>
    <property type="project" value="UniProtKB-KW"/>
</dbReference>
<dbReference type="GO" id="GO:0032196">
    <property type="term" value="P:transposition"/>
    <property type="evidence" value="ECO:0007669"/>
    <property type="project" value="UniProtKB-KW"/>
</dbReference>
<dbReference type="GO" id="GO:0075523">
    <property type="term" value="P:viral translational frameshifting"/>
    <property type="evidence" value="ECO:0007669"/>
    <property type="project" value="UniProtKB-KW"/>
</dbReference>
<dbReference type="CDD" id="cd09272">
    <property type="entry name" value="RNase_HI_RT_Ty1"/>
    <property type="match status" value="1"/>
</dbReference>
<dbReference type="FunFam" id="3.30.420.10:FF:000050">
    <property type="entry name" value="Transposon Ty2-DR3 Gag-Pol polyprotein"/>
    <property type="match status" value="1"/>
</dbReference>
<dbReference type="Gene3D" id="3.30.420.10">
    <property type="entry name" value="Ribonuclease H-like superfamily/Ribonuclease H"/>
    <property type="match status" value="1"/>
</dbReference>
<dbReference type="InterPro" id="IPR001969">
    <property type="entry name" value="Aspartic_peptidase_AS"/>
</dbReference>
<dbReference type="InterPro" id="IPR043502">
    <property type="entry name" value="DNA/RNA_pol_sf"/>
</dbReference>
<dbReference type="InterPro" id="IPR001584">
    <property type="entry name" value="Integrase_cat-core"/>
</dbReference>
<dbReference type="InterPro" id="IPR039537">
    <property type="entry name" value="Retrotran_Ty1/copia-like"/>
</dbReference>
<dbReference type="InterPro" id="IPR012337">
    <property type="entry name" value="RNaseH-like_sf"/>
</dbReference>
<dbReference type="InterPro" id="IPR036397">
    <property type="entry name" value="RNaseH_sf"/>
</dbReference>
<dbReference type="InterPro" id="IPR013103">
    <property type="entry name" value="RVT_2"/>
</dbReference>
<dbReference type="InterPro" id="IPR015820">
    <property type="entry name" value="TYA"/>
</dbReference>
<dbReference type="PANTHER" id="PTHR42648">
    <property type="entry name" value="TRANSPOSASE, PUTATIVE-RELATED"/>
    <property type="match status" value="1"/>
</dbReference>
<dbReference type="PANTHER" id="PTHR42648:SF11">
    <property type="entry name" value="TRANSPOSON TY4-P GAG-POL POLYPROTEIN"/>
    <property type="match status" value="1"/>
</dbReference>
<dbReference type="Pfam" id="PF00665">
    <property type="entry name" value="rve"/>
    <property type="match status" value="1"/>
</dbReference>
<dbReference type="Pfam" id="PF07727">
    <property type="entry name" value="RVT_2"/>
    <property type="match status" value="1"/>
</dbReference>
<dbReference type="Pfam" id="PF01021">
    <property type="entry name" value="TYA"/>
    <property type="match status" value="1"/>
</dbReference>
<dbReference type="SUPFAM" id="SSF56672">
    <property type="entry name" value="DNA/RNA polymerases"/>
    <property type="match status" value="1"/>
</dbReference>
<dbReference type="SUPFAM" id="SSF53098">
    <property type="entry name" value="Ribonuclease H-like"/>
    <property type="match status" value="1"/>
</dbReference>
<dbReference type="PROSITE" id="PS00141">
    <property type="entry name" value="ASP_PROTEASE"/>
    <property type="match status" value="1"/>
</dbReference>
<dbReference type="PROSITE" id="PS50994">
    <property type="entry name" value="INTEGRASE"/>
    <property type="match status" value="1"/>
</dbReference>
<feature type="chain" id="PRO_0000279069" description="Transposon Ty1-GR3 Gag-Pol polyprotein">
    <location>
        <begin position="1"/>
        <end position="1755"/>
    </location>
</feature>
<feature type="chain" id="PRO_0000279070" description="Capsid protein" evidence="1">
    <location>
        <begin position="1"/>
        <end position="401"/>
    </location>
</feature>
<feature type="chain" id="PRO_0000279071" description="Ty1 protease" evidence="1">
    <location>
        <begin position="402"/>
        <end position="582"/>
    </location>
</feature>
<feature type="chain" id="PRO_0000279072" description="Integrase" evidence="1">
    <location>
        <begin position="583"/>
        <end position="1217"/>
    </location>
</feature>
<feature type="chain" id="PRO_0000279073" description="Reverse transcriptase/ribonuclease H" evidence="1">
    <location>
        <begin position="1218"/>
        <end position="1755"/>
    </location>
</feature>
<feature type="domain" description="Integrase catalytic" evidence="3">
    <location>
        <begin position="660"/>
        <end position="835"/>
    </location>
</feature>
<feature type="domain" description="Reverse transcriptase Ty1/copia-type">
    <location>
        <begin position="1338"/>
        <end position="1476"/>
    </location>
</feature>
<feature type="domain" description="RNase H Ty1/copia-type">
    <location>
        <begin position="1610"/>
        <end position="1752"/>
    </location>
</feature>
<feature type="region of interest" description="Disordered" evidence="5">
    <location>
        <begin position="1"/>
        <end position="93"/>
    </location>
</feature>
<feature type="region of interest" description="Disordered" evidence="5">
    <location>
        <begin position="126"/>
        <end position="173"/>
    </location>
</feature>
<feature type="region of interest" description="RNA-binding" evidence="1">
    <location>
        <begin position="299"/>
        <end position="401"/>
    </location>
</feature>
<feature type="region of interest" description="Disordered" evidence="5">
    <location>
        <begin position="352"/>
        <end position="421"/>
    </location>
</feature>
<feature type="region of interest" description="Integrase-type zinc finger-like">
    <location>
        <begin position="583"/>
        <end position="640"/>
    </location>
</feature>
<feature type="region of interest" description="Disordered" evidence="5">
    <location>
        <begin position="956"/>
        <end position="1172"/>
    </location>
</feature>
<feature type="short sequence motif" description="Bipartite nuclear localization signal" evidence="1">
    <location>
        <begin position="1178"/>
        <end position="1212"/>
    </location>
</feature>
<feature type="compositionally biased region" description="Polar residues" evidence="5">
    <location>
        <begin position="1"/>
        <end position="10"/>
    </location>
</feature>
<feature type="compositionally biased region" description="Polar residues" evidence="5">
    <location>
        <begin position="48"/>
        <end position="60"/>
    </location>
</feature>
<feature type="compositionally biased region" description="Polar residues" evidence="5">
    <location>
        <begin position="127"/>
        <end position="152"/>
    </location>
</feature>
<feature type="compositionally biased region" description="Low complexity" evidence="5">
    <location>
        <begin position="153"/>
        <end position="165"/>
    </location>
</feature>
<feature type="compositionally biased region" description="Low complexity" evidence="5">
    <location>
        <begin position="402"/>
        <end position="418"/>
    </location>
</feature>
<feature type="compositionally biased region" description="Low complexity" evidence="5">
    <location>
        <begin position="960"/>
        <end position="969"/>
    </location>
</feature>
<feature type="compositionally biased region" description="Polar residues" evidence="5">
    <location>
        <begin position="1005"/>
        <end position="1015"/>
    </location>
</feature>
<feature type="compositionally biased region" description="Polar residues" evidence="5">
    <location>
        <begin position="1031"/>
        <end position="1043"/>
    </location>
</feature>
<feature type="compositionally biased region" description="Basic and acidic residues" evidence="5">
    <location>
        <begin position="1044"/>
        <end position="1053"/>
    </location>
</feature>
<feature type="compositionally biased region" description="Polar residues" evidence="5">
    <location>
        <begin position="1054"/>
        <end position="1082"/>
    </location>
</feature>
<feature type="compositionally biased region" description="Polar residues" evidence="5">
    <location>
        <begin position="1095"/>
        <end position="1106"/>
    </location>
</feature>
<feature type="active site" description="For protease activity; shared with dimeric partner" evidence="4">
    <location>
        <position position="461"/>
    </location>
</feature>
<feature type="binding site" evidence="3">
    <location>
        <position position="671"/>
    </location>
    <ligand>
        <name>Mg(2+)</name>
        <dbReference type="ChEBI" id="CHEBI:18420"/>
        <label>1</label>
        <note>catalytic; for integrase activity</note>
    </ligand>
</feature>
<feature type="binding site" evidence="3">
    <location>
        <position position="736"/>
    </location>
    <ligand>
        <name>Mg(2+)</name>
        <dbReference type="ChEBI" id="CHEBI:18420"/>
        <label>1</label>
        <note>catalytic; for integrase activity</note>
    </ligand>
</feature>
<feature type="binding site" evidence="3">
    <location>
        <position position="1346"/>
    </location>
    <ligand>
        <name>Mg(2+)</name>
        <dbReference type="ChEBI" id="CHEBI:18420"/>
        <label>2</label>
        <note>catalytic; for reverse transcriptase activity</note>
    </ligand>
</feature>
<feature type="binding site" evidence="3">
    <location>
        <position position="1427"/>
    </location>
    <ligand>
        <name>Mg(2+)</name>
        <dbReference type="ChEBI" id="CHEBI:18420"/>
        <label>2</label>
        <note>catalytic; for reverse transcriptase activity</note>
    </ligand>
</feature>
<feature type="binding site" evidence="3">
    <location>
        <position position="1428"/>
    </location>
    <ligand>
        <name>Mg(2+)</name>
        <dbReference type="ChEBI" id="CHEBI:18420"/>
        <label>2</label>
        <note>catalytic; for reverse transcriptase activity</note>
    </ligand>
</feature>
<feature type="binding site" evidence="3">
    <location>
        <position position="1610"/>
    </location>
    <ligand>
        <name>Mg(2+)</name>
        <dbReference type="ChEBI" id="CHEBI:18420"/>
        <label>3</label>
        <note>catalytic; for RNase H activity</note>
    </ligand>
</feature>
<feature type="binding site" evidence="3">
    <location>
        <position position="1652"/>
    </location>
    <ligand>
        <name>Mg(2+)</name>
        <dbReference type="ChEBI" id="CHEBI:18420"/>
        <label>3</label>
        <note>catalytic; for RNase H activity</note>
    </ligand>
</feature>
<feature type="binding site" evidence="3">
    <location>
        <position position="1685"/>
    </location>
    <ligand>
        <name>Mg(2+)</name>
        <dbReference type="ChEBI" id="CHEBI:18420"/>
        <label>3</label>
        <note>catalytic; for RNase H activity</note>
    </ligand>
</feature>
<feature type="site" description="Cleavage; by Ty1 protease" evidence="1">
    <location>
        <begin position="401"/>
        <end position="402"/>
    </location>
</feature>
<feature type="site" description="Cleavage; by Ty1 protease" evidence="1">
    <location>
        <begin position="582"/>
        <end position="583"/>
    </location>
</feature>
<feature type="site" description="Cleavage; by Ty1 protease" evidence="1">
    <location>
        <begin position="1217"/>
        <end position="1218"/>
    </location>
</feature>
<feature type="modified residue" description="Phosphoserine" evidence="2">
    <location>
        <position position="416"/>
    </location>
</feature>
<sequence length="1755" mass="198560">MESQQLSNYPHISHGSACASVTSKEVHTNQDPLDVSASKIQEYDKASTKANSQQTTTPASSAVPENPHHASPQPASVPPPQNGPYPQQCMMTQNQANPSGWSFYGHPSMIPYTPYQMSPMYFPPGPQSQFPQYPSSVGTPLSTPSPESGNTFTDSSSADSDMTSTKKYVRPPPMLTSPNDFPNWVKTYIKFLQNSNLGGIIPTVNGKPVRQITDDELTFLYNTFQIFAPSQFLPTWVKDILSVDYTDIMKILSKSIEKMQSDTQEANDIVTLANLQYNGSTPADAFETKVTNIIDRLNNNGIHINNKVACQLIMRGLSGEYKFLRYTRHRHLNMTVAELFLDIHAIYEEQQGSRNSKPNYRRNPSDEKNDSRSYTNTTKPKVIARNPQKTNNSKSKTARAHNVSTSNNSPSTDNDSISKSTTEPIQLNNKHDLHLGQKLTESTVNHTNHSDDELPGHLLLDSGASRTLIRSAHHIHSASSNPDINVVDAQKRNIPINAIGDLQFHFQDNTKTSIKVLHTPNIAYDLLSLNELAAVDITACFTKNVLERSDGTVLAPIVKYGDFYWVSKKYLLPSNISVPTINNVHTSESTRKYPYPFIHRMLAHANAQTIRYSLKNNTITYFNESDVDWSSAIDYQCPDCLIGKSTKHRHIKGSRLKYQNSYEPFQYLHTDIFGPVHNLPKSAPSYFISFTDETTKFRWVYPLHDRREDSILDVFTTILAFIKNQFQASVLVIQMDRGSEYTNRTLHKFLEKNGITPCYTTTADSRAHGVAERLNRTLLDDCRTQLQCSGLPNHLWFSAIEFSTIVRNSLASPKSKKSARQHAGLAGLDISTLLPFGQPVIVNDHNPNSKIHPRGIPGYALHPSRNSYGYIIYLPSLKKTVDTTNYVILQGKESRLDQFNYDALTFDEDLNRLTASYHSFIASNEIQESNDLNIESDHDFQSDIELHPEQPRNVLSKAVSPTDSTPPSTHTEDSKRVSKTNIRAPREVDPNISESNILPSKKRSSTPQISNIESTGSGGMHKLNVPLLAPMSQSNTHESSYASKSKDFRHSDSYSDNETNHTNVPISSTGGTNNKTVPQTSEQETEKRIIHRSPSIDTSSSESNSLHHVVPIKTSDTCPKENTEESIIADLPLPDLPPEPPTELSDSFKELPPINSRQTNSSLGGIGDSNAYTTINSKKRSLEDNETEIKVSRDTWNTKNMRSLEPPRSKKRIHLIAAVKAVKSIKPIRTTLRYDEAITYNKDIKEKEKYIEAYHKEVNQLLKMNTWDTDKYYDRKEIDPKRVINSMFIFNRKRDGTHKARFVARGDIQHPDTYDSGMQSNTVHHYALMTSLSLALDNNYYITQLDISSAYLYADIKEELYIRPPPHLGMNDKLIRLKKSLYGLKQSGANWYETIKSYLIKQCGMEEVRGWSCVFKNSQVTICLFVDDMILFSKDLNSNKRIIAKLKMQYDTKIINLGESDDEIQYDILGLEIKYQRGKYMKLGMENSLTEKIPKLNVPLNPNGRKLGAPGQPGLYINQQELELEEDDYKMKVHEMQKLIGLASYVGYKFRFDLLYYINTLAQHILFPSKQVLDMTYELIQFIWNTRDKQLIWHKSKPVKPTNKLVVISDASYGNQPYYKSQIGNIYLLNGKVIGGKSTKASLTCTSTTEAEIHAISESVPLLNNLSYLIQELDKKPITKGLLTDSKSTISIIISNNEEKFRNRFFGTKAMRLRDEVSGNHLHVCYIETKKNIADVMTKPLPIKTFKLLTNKWIH</sequence>
<accession>Q12316</accession>
<accession>D6VUU4</accession>
<gene>
    <name type="primary">TY1B-GR3</name>
    <name type="synonym">YGRCTy1-3 POL</name>
    <name type="ordered locus">YGR161C-D</name>
    <name type="ORF">G7025</name>
</gene>
<proteinExistence type="inferred from homology"/>
<comment type="function">
    <text evidence="1">Capsid protein (CA) is the structural component of the virus-like particle (VLP), forming the shell that encapsulates the retrotransposons dimeric RNA genome. The particles are assembled from trimer-clustered units and there are holes in the capsid shells that allow for the diffusion of macromolecules. CA also has nucleocapsid-like chaperone activity, promoting primer tRNA(i)-Met annealing to the multipartite primer-binding site (PBS), dimerization of Ty1 RNA and initiation of reverse transcription (By similarity).</text>
</comment>
<comment type="function">
    <text evidence="1">The aspartyl protease (PR) mediates the proteolytic cleavages of the Gag and Gag-Pol polyproteins after assembly of the VLP.</text>
</comment>
<comment type="function">
    <text evidence="1">Reverse transcriptase/ribonuclease H (RT) is a multifunctional enzyme that catalyzes the conversion of the retro-elements RNA genome into dsDNA within the VLP. The enzyme displays a DNA polymerase activity that can copy either DNA or RNA templates, and a ribonuclease H (RNase H) activity that cleaves the RNA strand of RNA-DNA heteroduplexes during plus-strand synthesis and hydrolyzes RNA primers. The conversion leads to a linear dsDNA copy of the retrotransposon that includes long terminal repeats (LTRs) at both ends (By similarity).</text>
</comment>
<comment type="function">
    <text evidence="1">Integrase (IN) targets the VLP to the nucleus, where a subparticle preintegration complex (PIC) containing at least integrase and the newly synthesized dsDNA copy of the retrotransposon must transit the nuclear membrane. Once in the nucleus, integrase performs the integration of the dsDNA into the host genome (By similarity).</text>
</comment>
<comment type="catalytic activity">
    <reaction>
        <text>DNA(n) + a 2'-deoxyribonucleoside 5'-triphosphate = DNA(n+1) + diphosphate</text>
        <dbReference type="Rhea" id="RHEA:22508"/>
        <dbReference type="Rhea" id="RHEA-COMP:17339"/>
        <dbReference type="Rhea" id="RHEA-COMP:17340"/>
        <dbReference type="ChEBI" id="CHEBI:33019"/>
        <dbReference type="ChEBI" id="CHEBI:61560"/>
        <dbReference type="ChEBI" id="CHEBI:173112"/>
        <dbReference type="EC" id="2.7.7.49"/>
    </reaction>
</comment>
<comment type="catalytic activity">
    <reaction>
        <text>DNA(n) + a 2'-deoxyribonucleoside 5'-triphosphate = DNA(n+1) + diphosphate</text>
        <dbReference type="Rhea" id="RHEA:22508"/>
        <dbReference type="Rhea" id="RHEA-COMP:17339"/>
        <dbReference type="Rhea" id="RHEA-COMP:17340"/>
        <dbReference type="ChEBI" id="CHEBI:33019"/>
        <dbReference type="ChEBI" id="CHEBI:61560"/>
        <dbReference type="ChEBI" id="CHEBI:173112"/>
        <dbReference type="EC" id="2.7.7.7"/>
    </reaction>
</comment>
<comment type="catalytic activity">
    <reaction>
        <text>Endonucleolytic cleavage to 5'-phosphomonoester.</text>
        <dbReference type="EC" id="3.1.26.4"/>
    </reaction>
</comment>
<comment type="subunit">
    <text evidence="1">The capsid protein forms a homotrimer, from which the VLPs are assembled. The protease is a homodimer, whose active site consists of two apposed aspartic acid residues (By similarity).</text>
</comment>
<comment type="subcellular location">
    <subcellularLocation>
        <location>Cytoplasm</location>
    </subcellularLocation>
    <subcellularLocation>
        <location evidence="1">Nucleus</location>
    </subcellularLocation>
</comment>
<comment type="alternative products">
    <event type="ribosomal frameshifting"/>
    <isoform>
        <id>Q12316-1</id>
        <name>Transposon Ty1-GR3 Gag-Pol polyprotein</name>
        <sequence type="displayed"/>
    </isoform>
    <isoform>
        <id>P0CX67-1</id>
        <name>Transposon Ty1-GR3 Gag polyprotein</name>
        <sequence type="external"/>
    </isoform>
    <text evidence="1">The Gag-Pol polyprotein is generated by a +1 ribosomal frameshift between the codons for Leu-435 and Gly-436. The ratio of Gag:Gag-Pol varies between 20:1 and 5:1 (By similarity).</text>
</comment>
<comment type="domain">
    <text evidence="1">The C-terminal RNA-binding region of CA is sufficient for all its nucleocapsid-like chaperone activities.</text>
</comment>
<comment type="domain">
    <text evidence="1">Integrase core domain contains the D-x(n)-D-x(35)-E motif, named for the phylogenetically conserved glutamic acid and aspartic acid residues and the invariant 35 amino acid spacing between the second and third acidic residues. Each acidic residue of the D,D(35)E motif is independently essential for the 3'-processing and strand transfer activities of purified integrase protein (By similarity).</text>
</comment>
<comment type="PTM">
    <text evidence="1">Initially, virus-like particles (VLPs) are composed of the structural unprocessed proteins Gag and Gag-Pol, and also contain the host initiator methionine tRNA (tRNA(i)-Met) which serves as a primer for minus-strand DNA synthesis, and a dimer of genomic Ty RNA. Processing of the polyproteins occurs within the particle and proceeds by an ordered pathway, called maturation. First, the protease (PR) is released by autocatalytic cleavage of the Gag-Pol polyprotein yielding capsid protein p45 and a Pol-p154 precursor protein. This cleavage is a prerequisite for subsequent processing of Pol-p154 at the remaining sites to release the mature structural and catalytic proteins. Maturation takes place prior to the RT reaction and is required to produce transposition-competent VLPs (By similarity).</text>
</comment>
<comment type="miscellaneous">
    <text>Retrotransposons are mobile genetic entities that are able to replicate via an RNA intermediate and a reverse transcription step. In contrast to retroviruses, retrotransposons are non-infectious, lack an envelope and remain intracellular. Ty1 retrotransposons belong to the copia elements (pseudoviridae).</text>
</comment>
<comment type="miscellaneous">
    <molecule>Isoform Transposon Ty1-GR3 Gag-Pol polyprotein</molecule>
    <text>Produced by +1 ribosomal frameshifting between codon Leu-435 and Gly-436 of the YGR161C-C ORF.</text>
</comment>
<comment type="sequence caution" evidence="6">
    <conflict type="erroneous initiation">
        <sequence resource="EMBL-CDS" id="CAA97178"/>
    </conflict>
</comment>
<comment type="sequence caution" evidence="6">
    <conflict type="erroneous initiation">
        <sequence resource="EMBL-CDS" id="CAA97182"/>
    </conflict>
</comment>